<protein>
    <recommendedName>
        <fullName>Protein M2-2</fullName>
    </recommendedName>
</protein>
<dbReference type="EMBL" id="AY297749">
    <property type="protein sequence ID" value="AAQ67697.1"/>
    <property type="molecule type" value="Genomic_RNA"/>
</dbReference>
<dbReference type="RefSeq" id="YP_012610.1">
    <property type="nucleotide sequence ID" value="NC_004148.2"/>
</dbReference>
<dbReference type="IntAct" id="Q6WB96">
    <property type="interactions" value="1"/>
</dbReference>
<dbReference type="Proteomes" id="UP000001398">
    <property type="component" value="Segment"/>
</dbReference>
<dbReference type="GO" id="GO:0005737">
    <property type="term" value="C:cytoplasm"/>
    <property type="evidence" value="ECO:0000314"/>
    <property type="project" value="UniProt"/>
</dbReference>
<dbReference type="GO" id="GO:0030430">
    <property type="term" value="C:host cell cytoplasm"/>
    <property type="evidence" value="ECO:0000305"/>
    <property type="project" value="UniProt"/>
</dbReference>
<dbReference type="GO" id="GO:0140311">
    <property type="term" value="F:protein sequestering activity"/>
    <property type="evidence" value="ECO:0000314"/>
    <property type="project" value="UniProt"/>
</dbReference>
<dbReference type="GO" id="GO:0039532">
    <property type="term" value="P:negative regulation of cytoplasmic pattern recognition receptor signaling pathway"/>
    <property type="evidence" value="ECO:0000314"/>
    <property type="project" value="UniProt"/>
</dbReference>
<dbReference type="GO" id="GO:0032480">
    <property type="term" value="P:negative regulation of type I interferon production"/>
    <property type="evidence" value="ECO:0000314"/>
    <property type="project" value="UniProt"/>
</dbReference>
<dbReference type="GO" id="GO:0039545">
    <property type="term" value="P:symbiont-mediated suppression of host cytoplasmic pattern recognition receptor signaling pathway via inhibition of MAVS activity"/>
    <property type="evidence" value="ECO:0007669"/>
    <property type="project" value="UniProtKB-KW"/>
</dbReference>
<feature type="chain" id="PRO_0000394813" description="Protein M2-2">
    <location>
        <begin position="1"/>
        <end position="71"/>
    </location>
</feature>
<reference key="1">
    <citation type="journal article" date="2003" name="Virology">
        <title>Genetic diversity between human metapneumovirus subgroups.</title>
        <authorList>
            <person name="Biacchesi S."/>
            <person name="Skiadopoulos M.H."/>
            <person name="Boivin G."/>
            <person name="Hanson C.T."/>
            <person name="Murphy B.R."/>
            <person name="Collins P.L."/>
            <person name="Buchholz U.J."/>
        </authorList>
    </citation>
    <scope>NUCLEOTIDE SEQUENCE [GENOMIC RNA]</scope>
</reference>
<reference key="2">
    <citation type="journal article" date="2005" name="J. Virol.">
        <title>Chimeric recombinant human metapneumoviruses with the nucleoprotein or phosphoprotein open reading frame replaced by that of avian metapneumovirus exhibit improved growth in vitro and attenuation in vivo.</title>
        <authorList>
            <person name="Pham Q.N."/>
            <person name="Biacchesi S."/>
            <person name="Skiadopoulos M.H."/>
            <person name="Murphy B.R."/>
            <person name="Collins P.L."/>
            <person name="Buchholz U.J."/>
        </authorList>
    </citation>
    <scope>NUCLEOTIDE SEQUENCE [GENOMIC RNA]</scope>
</reference>
<reference key="3">
    <citation type="journal article" date="2012" name="J. Virol.">
        <title>Human metapneumovirus M2-2 protein inhibits innate cellular signaling by targeting MAVS.</title>
        <authorList>
            <person name="Ren J."/>
            <person name="Wang Q."/>
            <person name="Kolli D."/>
            <person name="Prusak D.J."/>
            <person name="Tseng C.T."/>
            <person name="Chen Z.J."/>
            <person name="Li K."/>
            <person name="Wood T.G."/>
            <person name="Bao X."/>
        </authorList>
    </citation>
    <scope>INTERACTION WITH HOST MAVS</scope>
    <scope>FUNCTION</scope>
</reference>
<reference key="4">
    <citation type="journal article" date="2014" name="PLoS ONE">
        <title>Human metapneumovirus M2-2 protein inhibits innate immune response in monocyte-derived dendritic cells.</title>
        <authorList>
            <person name="Ren J."/>
            <person name="Liu G."/>
            <person name="Go J."/>
            <person name="Kolli D."/>
            <person name="Zhang G."/>
            <person name="Bao X."/>
        </authorList>
    </citation>
    <scope>FUNCTION</scope>
    <scope>INTERACTION WITH HOST MYD88</scope>
</reference>
<reference key="5">
    <citation type="journal article" date="2017" name="J. Virol.">
        <title>Human Metapneumovirus M2-2 Protein Acts as a Negative Regulator of Alpha Interferon Production by Plasmacytoid Dendritic Cells.</title>
        <authorList>
            <person name="Kitagawa Y."/>
            <person name="Sakai M."/>
            <person name="Funayama M."/>
            <person name="Itoh M."/>
            <person name="Gotoh B."/>
        </authorList>
    </citation>
    <scope>FUNCTION</scope>
    <scope>INTERACTION WITH HOST IRF7</scope>
</reference>
<reference key="6">
    <citation type="journal article" date="2022" name="Front. Immunol.">
        <title>Human metapneumovirus M2-2 protein inhibits RIG-I signaling by preventing TRIM25-mediated RIG-I ubiquitination.</title>
        <authorList>
            <person name="Tanaka Y."/>
            <person name="Morita N."/>
            <person name="Kitagawa Y."/>
            <person name="Gotoh B."/>
            <person name="Komatsu T."/>
        </authorList>
    </citation>
    <scope>FUNCTION</scope>
    <scope>INTERACTION WITH HOST TRIM25</scope>
</reference>
<gene>
    <name type="primary">M2</name>
</gene>
<organism>
    <name type="scientific">Human metapneumovirus (strain CAN97-83)</name>
    <name type="common">HMPV</name>
    <dbReference type="NCBI Taxonomy" id="694067"/>
    <lineage>
        <taxon>Viruses</taxon>
        <taxon>Riboviria</taxon>
        <taxon>Orthornavirae</taxon>
        <taxon>Negarnaviricota</taxon>
        <taxon>Haploviricotina</taxon>
        <taxon>Monjiviricetes</taxon>
        <taxon>Mononegavirales</taxon>
        <taxon>Pneumoviridae</taxon>
        <taxon>Metapneumovirus</taxon>
        <taxon>Metapneumovirus hominis</taxon>
    </lineage>
</organism>
<comment type="function">
    <text evidence="1 2 3 4 5">Mediates the regulatory switch from transcription to RNA replication (By similarity). Acts late in infection by inhibiting viral transcription and up-regulating RNA replication (By similarity). Plays a major role in antagonizing the type I IFN-mediated antiviral response (PubMed:23015697). Interacts with host MAVS and prevents the interaction with its upstream partner RIGI in the signaling pathway leading to interferon production (PubMed:23015697). Inhibits host RIGI signaling by preventing TRIM25-mediated RIGI ubiquitination (PubMed:36045682). Also inhibits viral-induced cytokine production in dendritic cells by targeting MYD88 thereby inhibiting MYD88-dependent gene transcription (PubMed:24618691). Also inhibits the phosphorylation of host IRF7 to prevent type I interferon production in dendritic cells (PubMed:28768858).</text>
</comment>
<comment type="subunit">
    <text evidence="2 3 4 5">Interacts with host MAVS; this interaction inhibits signaling pathway leading to interferon production (PubMed:23015697). Interacts with host MYD88; this interaction inhibits innate response in dendritic cells (PubMed:24618691). Interacts with TRIM25 (PubMed:36045682). Interacts with IRF7 (PubMed:28768858).</text>
</comment>
<comment type="interaction">
    <interactant intactId="EBI-6863628">
        <id>Q6WB96</id>
    </interactant>
    <interactant intactId="EBI-995373">
        <id>Q7Z434</id>
        <label>MAVS</label>
    </interactant>
    <organismsDiffer>true</organismsDiffer>
    <experiments>4</experiments>
</comment>
<comment type="subcellular location">
    <subcellularLocation>
        <location evidence="1">Host cytoplasm</location>
    </subcellularLocation>
</comment>
<comment type="similarity">
    <text evidence="6">Belongs to the metapneumovirus M2-2 protein family.</text>
</comment>
<accession>Q6WB96</accession>
<sequence length="71" mass="8189">MTLHMPCKTVKALIKCSEHGPVFITIEVDEMIWTQKELKEALSDGIVKSHTNIYNCYLENIEIIYVKAYLS</sequence>
<evidence type="ECO:0000250" key="1">
    <source>
        <dbReference type="UniProtKB" id="P88812"/>
    </source>
</evidence>
<evidence type="ECO:0000269" key="2">
    <source>
    </source>
</evidence>
<evidence type="ECO:0000269" key="3">
    <source>
    </source>
</evidence>
<evidence type="ECO:0000269" key="4">
    <source>
    </source>
</evidence>
<evidence type="ECO:0000269" key="5">
    <source>
    </source>
</evidence>
<evidence type="ECO:0000305" key="6"/>
<name>M22_HMPVC</name>
<keyword id="KW-1035">Host cytoplasm</keyword>
<keyword id="KW-0945">Host-virus interaction</keyword>
<keyword id="KW-1090">Inhibition of host innate immune response by virus</keyword>
<keyword id="KW-1097">Inhibition of host MAVS by virus</keyword>
<keyword id="KW-1113">Inhibition of host RLR pathway by virus</keyword>
<keyword id="KW-1185">Reference proteome</keyword>
<keyword id="KW-0899">Viral immunoevasion</keyword>
<keyword id="KW-0693">Viral RNA replication</keyword>
<proteinExistence type="evidence at protein level"/>
<organismHost>
    <name type="scientific">Homo sapiens</name>
    <name type="common">Human</name>
    <dbReference type="NCBI Taxonomy" id="9606"/>
</organismHost>